<accession>P9WPE7</accession>
<accession>L0T3Q6</accession>
<accession>P06806</accession>
<accession>P0A520</accession>
<accession>Q48920</accession>
<accession>Q48931</accession>
<evidence type="ECO:0000255" key="1">
    <source>
        <dbReference type="HAMAP-Rule" id="MF_00600"/>
    </source>
</evidence>
<evidence type="ECO:0000256" key="2">
    <source>
        <dbReference type="SAM" id="MobiDB-lite"/>
    </source>
</evidence>
<evidence type="ECO:0000269" key="3">
    <source>
    </source>
</evidence>
<evidence type="ECO:0000269" key="4">
    <source>
    </source>
</evidence>
<evidence type="ECO:0000269" key="5">
    <source>
    </source>
</evidence>
<evidence type="ECO:0000269" key="6">
    <source>
    </source>
</evidence>
<evidence type="ECO:0000269" key="7">
    <source>
    </source>
</evidence>
<evidence type="ECO:0000269" key="8">
    <source>
    </source>
</evidence>
<evidence type="ECO:0000269" key="9">
    <source>
    </source>
</evidence>
<evidence type="ECO:0000269" key="10">
    <source>
    </source>
</evidence>
<evidence type="ECO:0000269" key="11">
    <source>
    </source>
</evidence>
<evidence type="ECO:0000269" key="12">
    <source>
    </source>
</evidence>
<evidence type="ECO:0000269" key="13">
    <source>
    </source>
</evidence>
<evidence type="ECO:0000269" key="14">
    <source>
    </source>
</evidence>
<evidence type="ECO:0000269" key="15">
    <source>
    </source>
</evidence>
<evidence type="ECO:0000269" key="16">
    <source>
    </source>
</evidence>
<evidence type="ECO:0000269" key="17">
    <source>
    </source>
</evidence>
<evidence type="ECO:0000269" key="18">
    <source>
    </source>
</evidence>
<evidence type="ECO:0000303" key="19">
    <source>
    </source>
</evidence>
<evidence type="ECO:0000303" key="20">
    <source>
    </source>
</evidence>
<evidence type="ECO:0000303" key="21">
    <source>
    </source>
</evidence>
<evidence type="ECO:0000303" key="22">
    <source>
    </source>
</evidence>
<evidence type="ECO:0000303" key="23">
    <source>
    </source>
</evidence>
<evidence type="ECO:0000305" key="24"/>
<evidence type="ECO:0000305" key="25">
    <source>
    </source>
</evidence>
<evidence type="ECO:0000305" key="26">
    <source>
    </source>
</evidence>
<evidence type="ECO:0000305" key="27">
    <source>
    </source>
</evidence>
<evidence type="ECO:0007744" key="28">
    <source>
        <dbReference type="PDB" id="1SJP"/>
    </source>
</evidence>
<evidence type="ECO:0007744" key="29">
    <source>
        <dbReference type="PDB" id="3RTK"/>
    </source>
</evidence>
<evidence type="ECO:0007829" key="30">
    <source>
        <dbReference type="PDB" id="1SJP"/>
    </source>
</evidence>
<evidence type="ECO:0007829" key="31">
    <source>
        <dbReference type="PDB" id="3RTK"/>
    </source>
</evidence>
<proteinExistence type="evidence at protein level"/>
<sequence length="540" mass="56727">MAKTIAYDEEARRGLERGLNALADAVKVTLGPKGRNVVLEKKWGAPTITNDGVSIAKEIELEDPYEKIGAELVKEVAKKTDDVAGDGTTTATVLAQALVREGLRNVAAGANPLGLKRGIEKAVEKVTETLLKGAKEVETKEQIAATAAISAGDQSIGDLIAEAMDKVGNEGVITVEESNTFGLQLELTEGMRFDKGYISGYFVTDPERQEAVLEDPYILLVSSKVSTVKDLLPLLEKVIGAGKPLLIIAEDVEGEALSTLVVNKIRGTFKSVAVKAPGFGDRRKAMLQDMAILTGGQVISEEVGLTLENADLSLLGKARKVVVTKDETTIVEGAGDTDAIAGRVAQIRQEIENSDSDYDREKLQERLAKLAGGVAVIKAGAATEVELKERKHRIEDAVRNAKAAVEEGIVAGGGVTLLQAAPTLDELKLEGDEATGANIVKVALEAPLKQIAFNSGLEPGVVAEKVRNLPAGHGLNAQTGVYEDLLAAGVADPVKVTRSALQNAASIAGLFLTTEAVVADKPEKEKASVPGGGDMGGMDF</sequence>
<keyword id="KW-0002">3D-structure</keyword>
<keyword id="KW-0067">ATP-binding</keyword>
<keyword id="KW-0134">Cell wall</keyword>
<keyword id="KW-0143">Chaperone</keyword>
<keyword id="KW-1045">Host mitochondrion</keyword>
<keyword id="KW-0413">Isomerase</keyword>
<keyword id="KW-1017">Isopeptide bond</keyword>
<keyword id="KW-0547">Nucleotide-binding</keyword>
<keyword id="KW-1185">Reference proteome</keyword>
<keyword id="KW-0964">Secreted</keyword>
<keyword id="KW-0832">Ubl conjugation</keyword>
<keyword id="KW-0843">Virulence</keyword>
<protein>
    <recommendedName>
        <fullName evidence="1">Chaperonin GroEL 2</fullName>
        <ecNumber evidence="1">5.6.1.7</ecNumber>
    </recommendedName>
    <alternativeName>
        <fullName evidence="1">60 kDa chaperonin 2</fullName>
    </alternativeName>
    <alternativeName>
        <fullName evidence="22">65 kDa antigen</fullName>
    </alternativeName>
    <alternativeName>
        <fullName>Antigen A</fullName>
    </alternativeName>
    <alternativeName>
        <fullName>Cell wall protein A</fullName>
    </alternativeName>
    <alternativeName>
        <fullName evidence="1">Chaperonin-60 2</fullName>
        <shortName evidence="1">Cpn60 2</shortName>
    </alternativeName>
    <alternativeName>
        <fullName evidence="20">Heat shock protein 65</fullName>
        <shortName evidence="20">HSP65</shortName>
    </alternativeName>
    <component>
        <recommendedName>
            <fullName evidence="24">Cleaved form</fullName>
        </recommendedName>
    </component>
</protein>
<feature type="chain" id="PRO_0000063452" description="Chaperonin GroEL 2">
    <location>
        <begin position="1"/>
        <end position="540"/>
    </location>
</feature>
<feature type="chain" id="PRO_0000453198" description="Cleaved form" evidence="27">
    <location>
        <begin position="14"/>
        <end position="540"/>
    </location>
</feature>
<feature type="region of interest" description="Disordered" evidence="2">
    <location>
        <begin position="521"/>
        <end position="540"/>
    </location>
</feature>
<feature type="compositionally biased region" description="Gly residues" evidence="2">
    <location>
        <begin position="530"/>
        <end position="540"/>
    </location>
</feature>
<feature type="binding site" evidence="1">
    <location>
        <begin position="29"/>
        <end position="32"/>
    </location>
    <ligand>
        <name>ATP</name>
        <dbReference type="ChEBI" id="CHEBI:30616"/>
    </ligand>
</feature>
<feature type="binding site" evidence="1">
    <location>
        <begin position="86"/>
        <end position="90"/>
    </location>
    <ligand>
        <name>ATP</name>
        <dbReference type="ChEBI" id="CHEBI:30616"/>
    </ligand>
</feature>
<feature type="binding site" evidence="1">
    <location>
        <position position="413"/>
    </location>
    <ligand>
        <name>ATP</name>
        <dbReference type="ChEBI" id="CHEBI:30616"/>
    </ligand>
</feature>
<feature type="binding site" evidence="1">
    <location>
        <position position="492"/>
    </location>
    <ligand>
        <name>ATP</name>
        <dbReference type="ChEBI" id="CHEBI:30616"/>
    </ligand>
</feature>
<feature type="site" description="Cleavage by Hip1" evidence="13">
    <location>
        <begin position="13"/>
        <end position="14"/>
    </location>
</feature>
<feature type="cross-link" description="Isoglutamyl lysine isopeptide (Lys-Gln) (interchain with Q-Cter in protein Pup)" evidence="8">
    <location>
        <position position="132"/>
    </location>
</feature>
<feature type="mutagenesis site" description="Abolishes cleavage by Hip1." evidence="13">
    <original>RG</original>
    <variation>PP</variation>
    <location>
        <begin position="13"/>
        <end position="14"/>
    </location>
</feature>
<feature type="helix" evidence="31">
    <location>
        <begin position="64"/>
        <end position="77"/>
    </location>
</feature>
<feature type="helix" evidence="31">
    <location>
        <begin position="90"/>
        <end position="106"/>
    </location>
</feature>
<feature type="turn" evidence="31">
    <location>
        <begin position="107"/>
        <end position="109"/>
    </location>
</feature>
<feature type="helix" evidence="31">
    <location>
        <begin position="112"/>
        <end position="132"/>
    </location>
</feature>
<feature type="helix" evidence="31">
    <location>
        <begin position="140"/>
        <end position="151"/>
    </location>
</feature>
<feature type="helix" evidence="31">
    <location>
        <begin position="154"/>
        <end position="166"/>
    </location>
</feature>
<feature type="strand" evidence="31">
    <location>
        <begin position="171"/>
        <end position="176"/>
    </location>
</feature>
<feature type="strand" evidence="31">
    <location>
        <begin position="179"/>
        <end position="182"/>
    </location>
</feature>
<feature type="strand" evidence="31">
    <location>
        <begin position="184"/>
        <end position="188"/>
    </location>
</feature>
<feature type="strand" evidence="31">
    <location>
        <begin position="190"/>
        <end position="194"/>
    </location>
</feature>
<feature type="strand" evidence="31">
    <location>
        <begin position="197"/>
        <end position="199"/>
    </location>
</feature>
<feature type="helix" evidence="31">
    <location>
        <begin position="200"/>
        <end position="202"/>
    </location>
</feature>
<feature type="turn" evidence="31">
    <location>
        <begin position="206"/>
        <end position="209"/>
    </location>
</feature>
<feature type="strand" evidence="31">
    <location>
        <begin position="210"/>
        <end position="215"/>
    </location>
</feature>
<feature type="strand" evidence="31">
    <location>
        <begin position="217"/>
        <end position="225"/>
    </location>
</feature>
<feature type="turn" evidence="31">
    <location>
        <begin position="229"/>
        <end position="231"/>
    </location>
</feature>
<feature type="helix" evidence="31">
    <location>
        <begin position="232"/>
        <end position="239"/>
    </location>
</feature>
<feature type="turn" evidence="31">
    <location>
        <begin position="240"/>
        <end position="242"/>
    </location>
</feature>
<feature type="strand" evidence="31">
    <location>
        <begin position="245"/>
        <end position="252"/>
    </location>
</feature>
<feature type="helix" evidence="31">
    <location>
        <begin position="254"/>
        <end position="266"/>
    </location>
</feature>
<feature type="strand" evidence="31">
    <location>
        <begin position="271"/>
        <end position="275"/>
    </location>
</feature>
<feature type="helix" evidence="31">
    <location>
        <begin position="280"/>
        <end position="294"/>
    </location>
</feature>
<feature type="strand" evidence="30">
    <location>
        <begin position="298"/>
        <end position="300"/>
    </location>
</feature>
<feature type="strand" evidence="31">
    <location>
        <begin position="301"/>
        <end position="304"/>
    </location>
</feature>
<feature type="strand" evidence="30">
    <location>
        <begin position="307"/>
        <end position="309"/>
    </location>
</feature>
<feature type="turn" evidence="31">
    <location>
        <begin position="312"/>
        <end position="314"/>
    </location>
</feature>
<feature type="strand" evidence="31">
    <location>
        <begin position="315"/>
        <end position="323"/>
    </location>
</feature>
<feature type="strand" evidence="31">
    <location>
        <begin position="328"/>
        <end position="333"/>
    </location>
</feature>
<feature type="helix" evidence="31">
    <location>
        <begin position="337"/>
        <end position="352"/>
    </location>
</feature>
<feature type="helix" evidence="31">
    <location>
        <begin position="357"/>
        <end position="372"/>
    </location>
</feature>
<feature type="strand" evidence="31">
    <location>
        <begin position="374"/>
        <end position="378"/>
    </location>
</feature>
<feature type="helix" evidence="31">
    <location>
        <begin position="386"/>
        <end position="407"/>
    </location>
</feature>
<feature type="strand" evidence="31">
    <location>
        <begin position="409"/>
        <end position="411"/>
    </location>
</feature>
<feature type="turn" evidence="31">
    <location>
        <begin position="412"/>
        <end position="414"/>
    </location>
</feature>
<feature type="helix" evidence="31">
    <location>
        <begin position="415"/>
        <end position="418"/>
    </location>
</feature>
<feature type="helix" evidence="31">
    <location>
        <begin position="419"/>
        <end position="423"/>
    </location>
</feature>
<feature type="helix" evidence="31">
    <location>
        <begin position="433"/>
        <end position="443"/>
    </location>
</feature>
<feature type="helix" evidence="31">
    <location>
        <begin position="446"/>
        <end position="452"/>
    </location>
</feature>
<feature type="turn" evidence="31">
    <location>
        <begin position="453"/>
        <end position="456"/>
    </location>
</feature>
<feature type="helix" evidence="31">
    <location>
        <begin position="459"/>
        <end position="468"/>
    </location>
</feature>
<feature type="strand" evidence="31">
    <location>
        <begin position="477"/>
        <end position="479"/>
    </location>
</feature>
<feature type="turn" evidence="31">
    <location>
        <begin position="485"/>
        <end position="489"/>
    </location>
</feature>
<feature type="strand" evidence="31">
    <location>
        <begin position="491"/>
        <end position="493"/>
    </location>
</feature>
<feature type="helix" evidence="31">
    <location>
        <begin position="494"/>
        <end position="513"/>
    </location>
</feature>
<reference key="1">
    <citation type="journal article" date="1987" name="J. Bacteriol.">
        <title>The 65-kilodalton antigen of Mycobacterium tuberculosis.</title>
        <authorList>
            <person name="Shinnick T.M."/>
        </authorList>
    </citation>
    <scope>NUCLEOTIDE SEQUENCE [GENOMIC DNA]</scope>
    <source>
        <strain>ATCC 35801 / TMC 107 / Erdman</strain>
    </source>
</reference>
<reference key="2">
    <citation type="journal article" date="1998" name="Nature">
        <title>Deciphering the biology of Mycobacterium tuberculosis from the complete genome sequence.</title>
        <authorList>
            <person name="Cole S.T."/>
            <person name="Brosch R."/>
            <person name="Parkhill J."/>
            <person name="Garnier T."/>
            <person name="Churcher C.M."/>
            <person name="Harris D.E."/>
            <person name="Gordon S.V."/>
            <person name="Eiglmeier K."/>
            <person name="Gas S."/>
            <person name="Barry C.E. III"/>
            <person name="Tekaia F."/>
            <person name="Badcock K."/>
            <person name="Basham D."/>
            <person name="Brown D."/>
            <person name="Chillingworth T."/>
            <person name="Connor R."/>
            <person name="Davies R.M."/>
            <person name="Devlin K."/>
            <person name="Feltwell T."/>
            <person name="Gentles S."/>
            <person name="Hamlin N."/>
            <person name="Holroyd S."/>
            <person name="Hornsby T."/>
            <person name="Jagels K."/>
            <person name="Krogh A."/>
            <person name="McLean J."/>
            <person name="Moule S."/>
            <person name="Murphy L.D."/>
            <person name="Oliver S."/>
            <person name="Osborne J."/>
            <person name="Quail M.A."/>
            <person name="Rajandream M.A."/>
            <person name="Rogers J."/>
            <person name="Rutter S."/>
            <person name="Seeger K."/>
            <person name="Skelton S."/>
            <person name="Squares S."/>
            <person name="Squares R."/>
            <person name="Sulston J.E."/>
            <person name="Taylor K."/>
            <person name="Whitehead S."/>
            <person name="Barrell B.G."/>
        </authorList>
    </citation>
    <scope>NUCLEOTIDE SEQUENCE [LARGE SCALE GENOMIC DNA]</scope>
    <source>
        <strain>ATCC 25618 / H37Rv</strain>
    </source>
</reference>
<reference key="3">
    <citation type="submission" date="1996-05" db="EMBL/GenBank/DDBJ databases">
        <authorList>
            <person name="Ros C."/>
            <person name="Belak K."/>
        </authorList>
    </citation>
    <scope>NUCLEOTIDE SEQUENCE [GENOMIC DNA] OF 46-196</scope>
    <source>
        <strain>12-14001</strain>
    </source>
</reference>
<reference key="4">
    <citation type="journal article" date="1995" name="Arch. Pathol. Lab. Med.">
        <title>Rapid Mycobacterium species assignment and unambiguous identification of mutations associated with antimicrobial resistance in Mycobacterium tuberculosis by automated DNA sequencing.</title>
        <authorList>
            <person name="Kapur V."/>
            <person name="Li L.L."/>
            <person name="Hamrick M.R."/>
            <person name="Plikaytis B.B."/>
            <person name="Shinnick T.M."/>
            <person name="Telenti A."/>
            <person name="Jacobs W.R. Jr."/>
            <person name="Banerjee A."/>
            <person name="Cole S."/>
            <person name="Yuen K.Y."/>
            <person name="Clarridge J.E."/>
            <person name="Kreiswirth B.N."/>
            <person name="Musser J.M."/>
        </authorList>
    </citation>
    <scope>NUCLEOTIDE SEQUENCE [GENOMIC DNA] OF 64-183</scope>
</reference>
<reference key="5">
    <citation type="journal article" date="1995" name="Rinsho Byori">
        <title>Detection and identification of mycobacteria by PCR-RFLP method.</title>
        <authorList>
            <person name="Hidaka E."/>
            <person name="Ueno I."/>
            <person name="Kawakami Y."/>
            <person name="Furuwatari C."/>
            <person name="Furihata K."/>
            <person name="Katsuyama T."/>
        </authorList>
    </citation>
    <scope>NUCLEOTIDE SEQUENCE [GENOMIC DNA] OF 65-178</scope>
</reference>
<reference key="6">
    <citation type="journal article" date="2004" name="J. Mol. Biol.">
        <title>Mycobacterium tuberculosis GroEL homologues unusually exist as lower oligomers and retain the ability to suppress aggregation of substrate proteins.</title>
        <authorList>
            <person name="Qamra R."/>
            <person name="Srinivas V."/>
            <person name="Mande S.C."/>
        </authorList>
    </citation>
    <scope>FUNCTION AS A CHAPERONE</scope>
    <scope>ATPASE ACTIVITY</scope>
    <scope>BIOPHYSICOCHEMICAL PROPERTIES</scope>
    <scope>SUBUNIT</scope>
    <source>
        <strain>ATCC 25618 / H37Rv</strain>
    </source>
</reference>
<reference key="7">
    <citation type="journal article" date="2005" name="J. Biol. Chem.">
        <title>Mycobacterium tuberculosis heat shock proteins use diverse Toll-like receptor pathways to activate pro-inflammatory signals.</title>
        <authorList>
            <person name="Bulut Y."/>
            <person name="Michelsen K.S."/>
            <person name="Hayrapetian L."/>
            <person name="Naiki Y."/>
            <person name="Spallek R."/>
            <person name="Singh M."/>
            <person name="Arditi M."/>
        </authorList>
    </citation>
    <scope>FUNCTION IN INFECTION</scope>
</reference>
<reference key="8">
    <citation type="journal article" date="2008" name="Infect. Immun.">
        <title>A Mycobacterium tuberculosis mutant lacking the groEL homologue cpn60.1 is viable but fails to induce an inflammatory response in animal models of infection.</title>
        <authorList>
            <person name="Hu Y."/>
            <person name="Henderson B."/>
            <person name="Lund P.A."/>
            <person name="Tormay P."/>
            <person name="Ahmed M.T."/>
            <person name="Gurcha S.S."/>
            <person name="Besra G.S."/>
            <person name="Coates A.R."/>
        </authorList>
    </citation>
    <scope>FUNCTION AS A CHAPERONE</scope>
    <scope>INDUCTION</scope>
    <scope>DISRUPTION PHENOTYPE</scope>
    <source>
        <strain>ATCC 25618 / H37Rv</strain>
    </source>
</reference>
<reference key="9">
    <citation type="journal article" date="2009" name="Infect. Immun.">
        <title>Mycobacterium tuberculosis Cpn60.2 and DnaK are located on the bacterial surface, where Cpn60.2 facilitates efficient bacterial association with macrophages.</title>
        <authorList>
            <person name="Hickey T.B."/>
            <person name="Thorson L.M."/>
            <person name="Speert D.P."/>
            <person name="Daffe M."/>
            <person name="Stokes R.W."/>
        </authorList>
    </citation>
    <scope>FUNCTION</scope>
    <scope>SUBCELLULAR LOCATION</scope>
    <source>
        <strain>ATCC 35801 / TMC 107 / Erdman</strain>
    </source>
</reference>
<reference key="10">
    <citation type="journal article" date="2010" name="PLoS ONE">
        <title>Prokaryotic ubiquitin-like protein (Pup) proteome of Mycobacterium tuberculosis.</title>
        <authorList>
            <person name="Festa R.A."/>
            <person name="McAllister F."/>
            <person name="Pearce M.J."/>
            <person name="Mintseris J."/>
            <person name="Burns K.E."/>
            <person name="Gygi S.P."/>
            <person name="Darwin K.H."/>
        </authorList>
    </citation>
    <scope>PUPYLATION AT LYS-132</scope>
    <scope>IDENTIFICATION BY MASS SPECTROMETRY</scope>
    <source>
        <strain>ATCC 25618 / H37Rv</strain>
    </source>
</reference>
<reference key="11">
    <citation type="journal article" date="2010" name="Cell. Microbiol.">
        <title>Mycobacterium tuberculosis employs Cpn60.2 as an adhesin that binds CD43 on the macrophage surface.</title>
        <authorList>
            <person name="Hickey T.B."/>
            <person name="Ziltener H.J."/>
            <person name="Speert D.P."/>
            <person name="Stokes R.W."/>
        </authorList>
    </citation>
    <scope>FUNCTION IN VIRULENCE</scope>
    <scope>SUBCELLULAR LOCATION</scope>
    <scope>INTERACTION WITH CD43</scope>
</reference>
<reference key="12">
    <citation type="journal article" date="2011" name="Mol. Cell. Proteomics">
        <title>Proteogenomic analysis of Mycobacterium tuberculosis by high resolution mass spectrometry.</title>
        <authorList>
            <person name="Kelkar D.S."/>
            <person name="Kumar D."/>
            <person name="Kumar P."/>
            <person name="Balakrishnan L."/>
            <person name="Muthusamy B."/>
            <person name="Yadav A.K."/>
            <person name="Shrivastava P."/>
            <person name="Marimuthu A."/>
            <person name="Anand S."/>
            <person name="Sundaram H."/>
            <person name="Kingsbury R."/>
            <person name="Harsha H.C."/>
            <person name="Nair B."/>
            <person name="Prasad T.S."/>
            <person name="Chauhan D.S."/>
            <person name="Katoch K."/>
            <person name="Katoch V.M."/>
            <person name="Kumar P."/>
            <person name="Chaerkady R."/>
            <person name="Ramachandran S."/>
            <person name="Dash D."/>
            <person name="Pandey A."/>
        </authorList>
    </citation>
    <scope>IDENTIFICATION BY MASS SPECTROMETRY [LARGE SCALE ANALYSIS]</scope>
    <source>
        <strain>ATCC 25618 / H37Rv</strain>
    </source>
</reference>
<reference key="13">
    <citation type="journal article" date="2012" name="Tuberculosis">
        <title>Mycobacterium tuberculosis WhiB1 represses transcription of the essential chaperonin GroEL2.</title>
        <authorList>
            <person name="Stapleton M.R."/>
            <person name="Smith L.J."/>
            <person name="Hunt D.M."/>
            <person name="Buxton R.S."/>
            <person name="Green J."/>
        </authorList>
    </citation>
    <scope>INDUCTION</scope>
</reference>
<reference key="14">
    <citation type="journal article" date="2012" name="Mol. Microbiol.">
        <title>The unusual mycobacterial chaperonins: evidence for in vivo oligomerization and specialization of function.</title>
        <authorList>
            <person name="Fan M."/>
            <person name="Rao T."/>
            <person name="Zacco E."/>
            <person name="Ahmed M.T."/>
            <person name="Shukla A."/>
            <person name="Ojha A."/>
            <person name="Freeke J."/>
            <person name="Robinson C.V."/>
            <person name="Benesch J.L."/>
            <person name="Lund P.A."/>
        </authorList>
    </citation>
    <scope>FUNCTION AS A CHAPERONE</scope>
    <scope>ACTIVITY REGULATION</scope>
    <scope>SUBUNIT</scope>
    <scope>DOMAIN</scope>
</reference>
<reference key="15">
    <citation type="journal article" date="2014" name="PLoS Pathog.">
        <title>Mycobacterium tuberculosis Hip1 modulates macrophage responses through proteolysis of GroEL2.</title>
        <authorList>
            <person name="Naffin-Olivos J.L."/>
            <person name="Georgieva M."/>
            <person name="Goldfarb N."/>
            <person name="Madan-Lala R."/>
            <person name="Dong L."/>
            <person name="Bizzell E."/>
            <person name="Valinetz E."/>
            <person name="Brandt G.S."/>
            <person name="Yu S."/>
            <person name="Shabashvili D.E."/>
            <person name="Ringe D."/>
            <person name="Dunn B.M."/>
            <person name="Petsko G.A."/>
            <person name="Rengarajan J."/>
        </authorList>
    </citation>
    <scope>FUNCTION (CLEAVED FORM)</scope>
    <scope>SUBUNIT</scope>
    <scope>SUBCELLULAR LOCATION</scope>
    <scope>CLEAVAGE BY HIP1</scope>
    <scope>MUTAGENESIS OF 13-ARG-GLY-14</scope>
</reference>
<reference key="16">
    <citation type="journal article" date="2016" name="J. Bacteriol.">
        <title>GroEL2 of Mycobacterium tuberculosis reveals the importance of structural pliability in chaperonin function.</title>
        <authorList>
            <person name="Chilukoti N."/>
            <person name="Kumar C.M."/>
            <person name="Mande S.C."/>
        </authorList>
    </citation>
    <scope>ACTIVITY REGULATION</scope>
    <scope>DOMAIN</scope>
</reference>
<reference key="17">
    <citation type="journal article" date="2017" name="Biol. Open">
        <title>Mycobacterium tuberculosis Cpn60.2 (GroEL2) blocks macrophage apoptosis via interaction with mitochondrial mortalin.</title>
        <authorList>
            <person name="Joseph S."/>
            <person name="Yuen A."/>
            <person name="Singh V."/>
            <person name="Hmama Z."/>
        </authorList>
    </citation>
    <scope>FUNCTION (CLEAVED FORM)</scope>
    <scope>INTERACTION WITH HOST HSPA9 (CLEAVED FORM)</scope>
    <scope>SUBCELLULAR LOCATION (CLEAVED FORM)</scope>
</reference>
<reference key="18">
    <citation type="journal article" date="2018" name="Infect. Immun.">
        <title>Mycobacterium tuberculosis GroEL2 modulates dendritic cell responses.</title>
        <authorList>
            <person name="Georgieva M."/>
            <person name="Sia J.K."/>
            <person name="Bizzell E."/>
            <person name="Madan-Lala R."/>
            <person name="Rengarajan J."/>
        </authorList>
    </citation>
    <scope>FUNCTION IN VIRULENCE</scope>
</reference>
<reference evidence="28" key="19">
    <citation type="journal article" date="2004" name="J. Bacteriol.">
        <title>Crystal structure of the 65-kilodalton heat shock protein, chaperonin 60.2, of Mycobacterium tuberculosis.</title>
        <authorList>
            <person name="Qamra R."/>
            <person name="Mande S.C."/>
        </authorList>
    </citation>
    <scope>X-RAY CRYSTALLOGRAPHY (3.2 ANGSTROMS) OF 43-540</scope>
    <scope>SUBUNIT</scope>
</reference>
<reference evidence="29" key="20">
    <citation type="journal article" date="2011" name="J. Mol. Biol.">
        <title>The dimeric structure of the Cpn60.2 chaperonin of Mycobacterium tuberculosis at 2.8 A reveals possible modes of function.</title>
        <authorList>
            <person name="Shahar A."/>
            <person name="Melamed-Frank M."/>
            <person name="Kashi Y."/>
            <person name="Shimon L."/>
            <person name="Adir N."/>
        </authorList>
    </citation>
    <scope>X-RAY CRYSTALLOGRAPHY (2.80 ANGSTROMS)</scope>
    <scope>ATPASE ACTIVITY</scope>
    <scope>BIOPHYSICOCHEMICAL PROPERTIES</scope>
    <scope>SUBUNIT</scope>
</reference>
<comment type="function">
    <text evidence="1 3 6 10 12">Together with its co-chaperonin GroES, plays an essential role in assisting protein folding. The GroEL-GroES system forms a nano-cage that allows encapsulation of the non-native substrate proteins and provides a physical environment optimized to promote and accelerate protein folding (By similarity). Prevents aggregation of substrate proteins and promotes their refolding (PubMed:15327959, PubMed:18227175, PubMed:22834700). In vitro, activity may be independent of the presence or absence of the GroES co-chaperonin or ATP (PubMed:15327959). Shows weak ATPase activity (PubMed:15327959, PubMed:21802426).</text>
</comment>
<comment type="function">
    <text evidence="5 7 9 16">Mediates association of bacteria with macrophages (PubMed:19470749, PubMed:20633027). Acts as an adhesin that binds CD43 on the host macrophage surface (PubMed:20633027). The full-length protein elicits robust pro-inflammatory responses from dendritic cells (DCs) and promotes DC maturation and antigen presentation to T-cells. DCs exposed to full-length GroEL2 induce strong antigen-specific gamma interferon (IFN-gamma), interleukin-2 (IL-2), and IL-17A cytokine responses from CD4(+) T-cells (PubMed:29133346). Recombinant extracellular protein activates expression of NF-kappa-B in immortalized human dermal endothelial cells in a TLR4-dependent, TLR2-independent manner. Activation occurs via MYD88-dependent and -independent pathways and requires TIRAP, TRIF, TRAM and MD-2 (some experiments done in mouse cells, mice do not usually catch tuberculosis) (PubMed:15809303).</text>
</comment>
<comment type="function">
    <molecule>Cleaved form</molecule>
    <text evidence="13 15 16">Cleaved, monomeric GroEL2 is biologically relevant and significantly contributes to Hip1-mediated dampening of macrophage responses during M.tuberculosis (Mtb) infection (PubMed:24830429). Within macrophage, the cleaved form is able to detach from the bacterial surface and crosses the phagosomal membrane towards mitochondria organelles where it interacts with the host stress-70 protein (HSPA9 or mortalin) and blocks macrophage apoptosis, which promotes Mtb survival in the hostile macrophage environment (PubMed:28288970). The cleaved form is poorly immunostimulatory and is unable to promote DC maturation and antigen presentation. Proteolytic cleavage of GroEL2 allows Mtb to prevent optimal DC-T-cell cross talk during infection (PubMed:29133346).</text>
</comment>
<comment type="catalytic activity">
    <reaction evidence="1">
        <text>ATP + H2O + a folded polypeptide = ADP + phosphate + an unfolded polypeptide.</text>
        <dbReference type="EC" id="5.6.1.7"/>
    </reaction>
</comment>
<comment type="activity regulation">
    <text evidence="12 14">Conditions that promote oligomer formation increase the ATPase activity (PubMed:22834700). Chaperone activity is fundamentally influenced by the interdomain communication, even if oligomerization and the ability to recognize the substrates are retained (PubMed:26553853).</text>
</comment>
<comment type="biophysicochemical properties">
    <kinetics>
        <text evidence="3 10">kcat for ATPase activity is 0.28 min(-1) (PubMed:15327959). kcat for ATPase activity is 0.18 min(-1) (PubMed:21802426).</text>
    </kinetics>
</comment>
<comment type="subunit">
    <text evidence="1 3 4 9 10 12 13 26">Forms a cylinder of 14 subunits composed of two heptameric rings stacked back-to-back (Probable). Also exists as lower oligomers, including monomeric, dimeric, tetrameric and heptameric forms (PubMed:15327959, PubMed:15547284, PubMed:21802426, PubMed:22834700, PubMed:24830429). Forms monomers under standard conditions but oligomerizes in the presence of high concentrations of ammonium salts and either ATP or ADP (PubMed:22834700). Interacts with the co-chaperonin GroES (By similarity). Interacts with the serine protease Hip1 (PubMed:24830429). Interacts with host CD43 (PubMed:20633027).</text>
</comment>
<comment type="subunit">
    <molecule>Cleaved form</molecule>
    <text evidence="13 15">Monomer (PubMed:24830429). Hip1-dependent proteolytic cleavage converts multimeric GroEL2 to a monomeric form (PubMed:24830429). Interacts with host mitochondrial mortalin (PubMed:28288970).</text>
</comment>
<comment type="interaction">
    <interactant intactId="EBI-2945826">
        <id>P9WPE7</id>
    </interactant>
    <interactant intactId="EBI-2945875">
        <id>P9WI75</id>
        <label>pknF</label>
    </interactant>
    <organismsDiffer>false</organismsDiffer>
    <experiments>3</experiments>
</comment>
<comment type="subcellular location">
    <subcellularLocation>
        <location evidence="7 9">Secreted</location>
        <location evidence="7 9">Capsule</location>
    </subcellularLocation>
    <subcellularLocation>
        <location evidence="7 9">Cell surface</location>
    </subcellularLocation>
    <subcellularLocation>
        <location evidence="13">Secreted</location>
        <location evidence="13">Cell wall</location>
    </subcellularLocation>
    <text evidence="25">Although thought of as a cytoplasmic chaperone this protein is routinely found extracellularly in the absence of cell lysis.</text>
</comment>
<comment type="subcellular location">
    <molecule>Cleaved form</molecule>
    <subcellularLocation>
        <location evidence="13">Secreted</location>
    </subcellularLocation>
    <subcellularLocation>
        <location evidence="15">Host mitochondrion</location>
    </subcellularLocation>
    <text evidence="15">Exits phagosomal membrane and reaches macrophage mitochondria.</text>
</comment>
<comment type="induction">
    <text evidence="6 11">Induced in response to heat shock (45 degrees Celsius), pH 10, hyperosmolarity and starvation (PubMed:18227175). Repressed by WhiB1, activated by Cmr (PubMed:22464736).</text>
</comment>
<comment type="domain">
    <text evidence="12 14">Each subunit is composed of an apical domain, an intermediate domain and an equatorial domain (PubMed:26553853). The two hinges that connect the equatorial and intermediate domains (EI hinge) and the apical and intermediate domains (AI hinge) play a significant role in the chaperonin activity (PubMed:26553853). The N-terminus is important in determining the oligomerization status (PubMed:22834700).</text>
</comment>
<comment type="PTM">
    <text evidence="13">Cleaved by the mycobacterial serine protease Hip1 (PubMed:24830429). Hip1-dependent cleavage of multimeric GroEL2 results in release of cleaved monomeric GroEL2 into the extracellular milieu (PubMed:24830429).</text>
</comment>
<comment type="disruption phenotype">
    <text evidence="6">Essential, it cannot be deleted.</text>
</comment>
<comment type="miscellaneous">
    <text evidence="26">M.tuberculosis contains two copies of the groEL gene, groEL1 and groEL2. GroEL2 is probably the housekeeping chaperonin, with the GroEL1 proteins having evolved, following an ancestral gene duplication event, to take on a more specialized role or roles.</text>
</comment>
<comment type="miscellaneous">
    <text evidence="6 12">When coexpressed at high levels of expression with the co-cheperonin GroES, can complement the E.coli groEL mutant.</text>
</comment>
<comment type="miscellaneous">
    <text evidence="17 18">Purified 65 kDa antigen can elicit a strong delayed-type hypersensitivity reaction in experimental animals infected with M.tuberculosis. This protein is one of the major immunoreactive proteins of the mycobacteria (PubMed:3029018). It contains epitopes that are common to various species of mycobacteria (PubMed:7699930).</text>
</comment>
<comment type="similarity">
    <text evidence="1">Belongs to the chaperonin (HSP60) family.</text>
</comment>
<name>CH602_MYCTU</name>
<dbReference type="EC" id="5.6.1.7" evidence="1"/>
<dbReference type="EMBL" id="M15467">
    <property type="protein sequence ID" value="AAA88232.1"/>
    <property type="molecule type" value="Genomic_DNA"/>
</dbReference>
<dbReference type="EMBL" id="AL123456">
    <property type="protein sequence ID" value="CCP43171.1"/>
    <property type="molecule type" value="Genomic_DNA"/>
</dbReference>
<dbReference type="EMBL" id="U55825">
    <property type="protein sequence ID" value="AAC44458.1"/>
    <property type="molecule type" value="Genomic_DNA"/>
</dbReference>
<dbReference type="EMBL" id="U17957">
    <property type="protein sequence ID" value="AAB39076.1"/>
    <property type="molecule type" value="Genomic_DNA"/>
</dbReference>
<dbReference type="EMBL" id="S76635">
    <property type="protein sequence ID" value="AAP31974.1"/>
    <property type="molecule type" value="Genomic_DNA"/>
</dbReference>
<dbReference type="PIR" id="A26950">
    <property type="entry name" value="A26950"/>
</dbReference>
<dbReference type="RefSeq" id="NP_214954.1">
    <property type="nucleotide sequence ID" value="NC_000962.3"/>
</dbReference>
<dbReference type="PDB" id="1SJP">
    <property type="method" value="X-ray"/>
    <property type="resolution" value="3.20 A"/>
    <property type="chains" value="A/B=43-540"/>
</dbReference>
<dbReference type="PDB" id="3RTK">
    <property type="method" value="X-ray"/>
    <property type="resolution" value="2.80 A"/>
    <property type="chains" value="A/B=1-540"/>
</dbReference>
<dbReference type="PDBsum" id="1SJP"/>
<dbReference type="PDBsum" id="3RTK"/>
<dbReference type="SMR" id="P9WPE7"/>
<dbReference type="FunCoup" id="P9WPE7">
    <property type="interactions" value="428"/>
</dbReference>
<dbReference type="IntAct" id="P9WPE7">
    <property type="interactions" value="5"/>
</dbReference>
<dbReference type="STRING" id="83332.Rv0440"/>
<dbReference type="MoonProt" id="P9WPE7"/>
<dbReference type="PaxDb" id="83332-Rv0440"/>
<dbReference type="DNASU" id="886354"/>
<dbReference type="GeneID" id="886354"/>
<dbReference type="KEGG" id="mtu:Rv0440"/>
<dbReference type="KEGG" id="mtv:RVBD_0440"/>
<dbReference type="TubercuList" id="Rv0440"/>
<dbReference type="eggNOG" id="COG0459">
    <property type="taxonomic scope" value="Bacteria"/>
</dbReference>
<dbReference type="InParanoid" id="P9WPE7"/>
<dbReference type="OrthoDB" id="9766614at2"/>
<dbReference type="PhylomeDB" id="P9WPE7"/>
<dbReference type="SABIO-RK" id="P9WPE7"/>
<dbReference type="EvolutionaryTrace" id="P9WPE7"/>
<dbReference type="PRO" id="PR:P9WPE7"/>
<dbReference type="Proteomes" id="UP000001584">
    <property type="component" value="Chromosome"/>
</dbReference>
<dbReference type="GO" id="GO:0042603">
    <property type="term" value="C:capsule"/>
    <property type="evidence" value="ECO:0000314"/>
    <property type="project" value="CAFA"/>
</dbReference>
<dbReference type="GO" id="GO:0009986">
    <property type="term" value="C:cell surface"/>
    <property type="evidence" value="ECO:0007669"/>
    <property type="project" value="UniProtKB-SubCell"/>
</dbReference>
<dbReference type="GO" id="GO:0005829">
    <property type="term" value="C:cytosol"/>
    <property type="evidence" value="ECO:0007005"/>
    <property type="project" value="MTBBASE"/>
</dbReference>
<dbReference type="GO" id="GO:0005576">
    <property type="term" value="C:extracellular region"/>
    <property type="evidence" value="ECO:0007669"/>
    <property type="project" value="UniProtKB-SubCell"/>
</dbReference>
<dbReference type="GO" id="GO:1990220">
    <property type="term" value="C:GroEL-GroES complex"/>
    <property type="evidence" value="ECO:0000318"/>
    <property type="project" value="GO_Central"/>
</dbReference>
<dbReference type="GO" id="GO:0033650">
    <property type="term" value="C:host cell mitochondrion"/>
    <property type="evidence" value="ECO:0007669"/>
    <property type="project" value="UniProtKB-SubCell"/>
</dbReference>
<dbReference type="GO" id="GO:0009274">
    <property type="term" value="C:peptidoglycan-based cell wall"/>
    <property type="evidence" value="ECO:0000314"/>
    <property type="project" value="MTBBASE"/>
</dbReference>
<dbReference type="GO" id="GO:0005886">
    <property type="term" value="C:plasma membrane"/>
    <property type="evidence" value="ECO:0007005"/>
    <property type="project" value="MTBBASE"/>
</dbReference>
<dbReference type="GO" id="GO:0005524">
    <property type="term" value="F:ATP binding"/>
    <property type="evidence" value="ECO:0000318"/>
    <property type="project" value="GO_Central"/>
</dbReference>
<dbReference type="GO" id="GO:0140662">
    <property type="term" value="F:ATP-dependent protein folding chaperone"/>
    <property type="evidence" value="ECO:0007669"/>
    <property type="project" value="InterPro"/>
</dbReference>
<dbReference type="GO" id="GO:0016853">
    <property type="term" value="F:isomerase activity"/>
    <property type="evidence" value="ECO:0007669"/>
    <property type="project" value="UniProtKB-KW"/>
</dbReference>
<dbReference type="GO" id="GO:0051082">
    <property type="term" value="F:unfolded protein binding"/>
    <property type="evidence" value="ECO:0000318"/>
    <property type="project" value="GO_Central"/>
</dbReference>
<dbReference type="GO" id="GO:0044406">
    <property type="term" value="P:adhesion of symbiont to host"/>
    <property type="evidence" value="ECO:0000314"/>
    <property type="project" value="MTBBASE"/>
</dbReference>
<dbReference type="GO" id="GO:0051085">
    <property type="term" value="P:chaperone cofactor-dependent protein refolding"/>
    <property type="evidence" value="ECO:0000318"/>
    <property type="project" value="GO_Central"/>
</dbReference>
<dbReference type="GO" id="GO:0061077">
    <property type="term" value="P:chaperone-mediated protein folding"/>
    <property type="evidence" value="ECO:0000314"/>
    <property type="project" value="UniProtKB"/>
</dbReference>
<dbReference type="GO" id="GO:0042026">
    <property type="term" value="P:protein refolding"/>
    <property type="evidence" value="ECO:0007669"/>
    <property type="project" value="UniProtKB-UniRule"/>
</dbReference>
<dbReference type="GO" id="GO:0009408">
    <property type="term" value="P:response to heat"/>
    <property type="evidence" value="ECO:0000270"/>
    <property type="project" value="MTBBASE"/>
</dbReference>
<dbReference type="GO" id="GO:0001666">
    <property type="term" value="P:response to hypoxia"/>
    <property type="evidence" value="ECO:0000270"/>
    <property type="project" value="MTBBASE"/>
</dbReference>
<dbReference type="CDD" id="cd03344">
    <property type="entry name" value="GroEL"/>
    <property type="match status" value="1"/>
</dbReference>
<dbReference type="FunFam" id="3.50.7.10:FF:000001">
    <property type="entry name" value="60 kDa chaperonin"/>
    <property type="match status" value="1"/>
</dbReference>
<dbReference type="Gene3D" id="3.50.7.10">
    <property type="entry name" value="GroEL"/>
    <property type="match status" value="1"/>
</dbReference>
<dbReference type="Gene3D" id="1.10.560.10">
    <property type="entry name" value="GroEL-like equatorial domain"/>
    <property type="match status" value="1"/>
</dbReference>
<dbReference type="Gene3D" id="3.30.260.10">
    <property type="entry name" value="TCP-1-like chaperonin intermediate domain"/>
    <property type="match status" value="1"/>
</dbReference>
<dbReference type="HAMAP" id="MF_00600">
    <property type="entry name" value="CH60"/>
    <property type="match status" value="1"/>
</dbReference>
<dbReference type="InterPro" id="IPR018370">
    <property type="entry name" value="Chaperonin_Cpn60_CS"/>
</dbReference>
<dbReference type="InterPro" id="IPR001844">
    <property type="entry name" value="Cpn60/GroEL"/>
</dbReference>
<dbReference type="InterPro" id="IPR002423">
    <property type="entry name" value="Cpn60/GroEL/TCP-1"/>
</dbReference>
<dbReference type="InterPro" id="IPR027409">
    <property type="entry name" value="GroEL-like_apical_dom_sf"/>
</dbReference>
<dbReference type="InterPro" id="IPR027413">
    <property type="entry name" value="GROEL-like_equatorial_sf"/>
</dbReference>
<dbReference type="InterPro" id="IPR027410">
    <property type="entry name" value="TCP-1-like_intermed_sf"/>
</dbReference>
<dbReference type="NCBIfam" id="TIGR02348">
    <property type="entry name" value="GroEL"/>
    <property type="match status" value="1"/>
</dbReference>
<dbReference type="NCBIfam" id="NF000592">
    <property type="entry name" value="PRK00013.1"/>
    <property type="match status" value="1"/>
</dbReference>
<dbReference type="NCBIfam" id="NF009487">
    <property type="entry name" value="PRK12849.1"/>
    <property type="match status" value="1"/>
</dbReference>
<dbReference type="NCBIfam" id="NF009488">
    <property type="entry name" value="PRK12850.1"/>
    <property type="match status" value="1"/>
</dbReference>
<dbReference type="NCBIfam" id="NF009489">
    <property type="entry name" value="PRK12851.1"/>
    <property type="match status" value="1"/>
</dbReference>
<dbReference type="PANTHER" id="PTHR45633">
    <property type="entry name" value="60 KDA HEAT SHOCK PROTEIN, MITOCHONDRIAL"/>
    <property type="match status" value="1"/>
</dbReference>
<dbReference type="Pfam" id="PF00118">
    <property type="entry name" value="Cpn60_TCP1"/>
    <property type="match status" value="1"/>
</dbReference>
<dbReference type="PRINTS" id="PR00298">
    <property type="entry name" value="CHAPERONIN60"/>
</dbReference>
<dbReference type="SUPFAM" id="SSF52029">
    <property type="entry name" value="GroEL apical domain-like"/>
    <property type="match status" value="1"/>
</dbReference>
<dbReference type="SUPFAM" id="SSF48592">
    <property type="entry name" value="GroEL equatorial domain-like"/>
    <property type="match status" value="2"/>
</dbReference>
<dbReference type="PROSITE" id="PS00296">
    <property type="entry name" value="CHAPERONINS_CPN60"/>
    <property type="match status" value="1"/>
</dbReference>
<organism>
    <name type="scientific">Mycobacterium tuberculosis (strain ATCC 25618 / H37Rv)</name>
    <dbReference type="NCBI Taxonomy" id="83332"/>
    <lineage>
        <taxon>Bacteria</taxon>
        <taxon>Bacillati</taxon>
        <taxon>Actinomycetota</taxon>
        <taxon>Actinomycetes</taxon>
        <taxon>Mycobacteriales</taxon>
        <taxon>Mycobacteriaceae</taxon>
        <taxon>Mycobacterium</taxon>
        <taxon>Mycobacterium tuberculosis complex</taxon>
    </lineage>
</organism>
<gene>
    <name evidence="1" type="primary">groEL2</name>
    <name evidence="19" type="synonym">cpn60.2</name>
    <name evidence="1" type="synonym">groL2</name>
    <name evidence="23" type="synonym">hsp65</name>
    <name type="ordered locus">Rv0440</name>
    <name evidence="21" type="ORF">mtc28</name>
    <name type="ORF">MTV037.04</name>
</gene>